<accession>Q924U1</accession>
<accession>Q9Z0T7</accession>
<evidence type="ECO:0000255" key="1"/>
<evidence type="ECO:0000255" key="2">
    <source>
        <dbReference type="PROSITE-ProRule" id="PRU00521"/>
    </source>
</evidence>
<evidence type="ECO:0000256" key="3">
    <source>
        <dbReference type="SAM" id="MobiDB-lite"/>
    </source>
</evidence>
<evidence type="ECO:0000269" key="4">
    <source>
    </source>
</evidence>
<evidence type="ECO:0000269" key="5">
    <source>
    </source>
</evidence>
<evidence type="ECO:0000269" key="6">
    <source>
    </source>
</evidence>
<evidence type="ECO:0000269" key="7">
    <source>
    </source>
</evidence>
<evidence type="ECO:0000269" key="8">
    <source>
    </source>
</evidence>
<evidence type="ECO:0000269" key="9">
    <source>
    </source>
</evidence>
<evidence type="ECO:0000269" key="10">
    <source>
    </source>
</evidence>
<evidence type="ECO:0000269" key="11">
    <source>
    </source>
</evidence>
<evidence type="ECO:0000305" key="12"/>
<name>KISSR_RAT</name>
<gene>
    <name type="primary">Kiss1r</name>
    <name type="synonym">Gpr54</name>
</gene>
<reference key="1">
    <citation type="journal article" date="1999" name="FEBS Lett.">
        <title>Discovery of a receptor related to the galanin receptors.</title>
        <authorList>
            <person name="Lee D.K."/>
            <person name="Nguyen T."/>
            <person name="O'Neill G.P."/>
            <person name="Cheng R."/>
            <person name="Liu Y."/>
            <person name="Howard A.D."/>
            <person name="Coulombe N."/>
            <person name="Tan C.P."/>
            <person name="Tang-Nguyen A.-T."/>
            <person name="George S.R."/>
            <person name="O'Dowd B.F."/>
        </authorList>
    </citation>
    <scope>NUCLEOTIDE SEQUENCE [MRNA]</scope>
    <scope>TISSUE SPECIFICITY</scope>
    <scope>DEVELOPMENTAL STAGE</scope>
</reference>
<reference key="2">
    <citation type="journal article" date="2001" name="Nature">
        <title>Metastasis suppressor gene KiSS-1 encodes peptide ligand of a G-protein-coupled receptor.</title>
        <authorList>
            <person name="Ohtaki T."/>
            <person name="Shintani Y."/>
            <person name="Honda S."/>
            <person name="Matsumoto H."/>
            <person name="Hori A."/>
            <person name="Kanehashi K."/>
            <person name="Terao Y."/>
            <person name="Kumano S."/>
            <person name="Takatsu Y."/>
            <person name="Masuda Y."/>
            <person name="Ishibashi Y."/>
            <person name="Watanabe T."/>
            <person name="Asada M."/>
            <person name="Yamada T."/>
            <person name="Suenaga M."/>
            <person name="Kitada C."/>
            <person name="Usuki S."/>
            <person name="Kurokawa T."/>
            <person name="Onda H."/>
            <person name="Nishimura O."/>
            <person name="Fujino M."/>
        </authorList>
    </citation>
    <scope>NUCLEOTIDE SEQUENCE [MRNA]</scope>
</reference>
<reference key="3">
    <citation type="journal article" date="2001" name="J. Biol. Chem.">
        <title>The metastasis suppressor gene KiSS-1 encodes kisspeptins, the natural ligands of the orphan G protein-coupled receptor GPR54.</title>
        <authorList>
            <person name="Kotani M."/>
            <person name="Detheux M."/>
            <person name="Vandenbogaerde A."/>
            <person name="Communi D."/>
            <person name="Vanderwinden J.-M."/>
            <person name="Le Poul E."/>
            <person name="Brezillon S."/>
            <person name="Tyldesley R."/>
            <person name="Suarez-Huerta N."/>
            <person name="Vandeput F."/>
            <person name="Blanpain C."/>
            <person name="Schiffmann S.N."/>
            <person name="Vassart G."/>
            <person name="Parmentier M."/>
        </authorList>
    </citation>
    <scope>ROLE IN STIMULATION OF OXYTOCIN SECRETION</scope>
    <source>
        <tissue>Hypothalamus</tissue>
    </source>
</reference>
<reference key="4">
    <citation type="journal article" date="2004" name="Biochim. Biophys. Acta">
        <title>Expression of KiSS-1, a metastasis suppressor gene, in trophoblast giant cells of the rat placenta.</title>
        <authorList>
            <person name="Terao Y."/>
            <person name="Kumano S."/>
            <person name="Takatsu Y."/>
            <person name="Hattori M."/>
            <person name="Nishimura A."/>
            <person name="Ohtaki T."/>
            <person name="Shintani Y."/>
        </authorList>
    </citation>
    <scope>TISSUE SPECIFICITY</scope>
</reference>
<reference key="5">
    <citation type="journal article" date="2004" name="Biochem. Biophys. Res. Commun.">
        <title>Peripheral administration of metastin induces marked gonadotropin release and ovulation in the rat.</title>
        <authorList>
            <person name="Matsui H."/>
            <person name="Takatsu Y."/>
            <person name="Kumano S."/>
            <person name="Matsumoto H."/>
            <person name="Ohtaki T."/>
        </authorList>
    </citation>
    <scope>POSSIBLE ROLE IN GONADOPTROPIN RELEASE</scope>
</reference>
<reference key="6">
    <citation type="journal article" date="2004" name="Endocrinology">
        <title>Developmental and hormonally regulated messenger ribonucleic acid expression of KiSS-1 and its putative receptor, GPR54, in rat hypothalamus and potent luteinizing hormone-releasing activity of KiSS-1 peptide.</title>
        <authorList>
            <person name="Navarro V.M."/>
            <person name="Castellano J.M."/>
            <person name="Fernandez-Fernandez R."/>
            <person name="Barreiro M.L."/>
            <person name="Roa J."/>
            <person name="Sanchez-Criado J.E."/>
            <person name="Aguilar E."/>
            <person name="Dieguez C."/>
            <person name="Pinilla L."/>
            <person name="Tena-Sempere M."/>
        </authorList>
    </citation>
    <scope>TISSUE SPECIFICITY</scope>
    <scope>FUNCTION</scope>
</reference>
<reference key="7">
    <citation type="journal article" date="2004" name="J. Neuroendocrinol.">
        <title>Central and peripheral administration of kisspeptin-10 stimulates the hypothalamic-pituitary-gonadal axis.</title>
        <authorList>
            <person name="Thompson E.L."/>
            <person name="Patterson M."/>
            <person name="Murphy K.G."/>
            <person name="Smith K.L."/>
            <person name="Dhillo W.S."/>
            <person name="Todd J.F."/>
            <person name="Ghatei M.A."/>
            <person name="Bloom S.R."/>
        </authorList>
    </citation>
    <scope>STIMULATION OF THE HYPOTHALAMIC-PITUITARY-GONADAL AXIS</scope>
</reference>
<reference key="8">
    <citation type="journal article" date="2004" name="Neuroendocrinology">
        <title>Kisspeptin activation of gonadotropin releasing hormone neurons and regulation of KiSS-1 mRNA in the male rat.</title>
        <authorList>
            <person name="Irwig M.S."/>
            <person name="Fraley G.S."/>
            <person name="Smith J.T."/>
            <person name="Acohido B.V."/>
            <person name="Popa S.M."/>
            <person name="Cunningham M.J."/>
            <person name="Gottsch M.L."/>
            <person name="Clifton D.K."/>
            <person name="Steiner R.A."/>
        </authorList>
    </citation>
    <scope>INVOLVEMENT IN REGULATION OF GONADOTROPIN SECRETION</scope>
</reference>
<reference key="9">
    <citation type="journal article" date="2004" name="J. Physiol. (Lond.)">
        <title>Advanced vaginal opening and precocious activation of the reproductive axis by KiSS-1 peptide, the endogenous ligand of GPR54.</title>
        <authorList>
            <person name="Navarro V.M."/>
            <person name="Fernandez-Fernandez R."/>
            <person name="Castellano J.M."/>
            <person name="Roa J."/>
            <person name="Mayen A."/>
            <person name="Barreiro M.L."/>
            <person name="Gaytan F."/>
            <person name="Aguilar E."/>
            <person name="Pinilla L."/>
            <person name="Dieguez C."/>
            <person name="Tena-Sempere M."/>
        </authorList>
    </citation>
    <scope>FUNCTION</scope>
</reference>
<reference key="10">
    <citation type="journal article" date="2005" name="Endocrinology">
        <title>Characterization of the potent luteinizing hormone-releasing activity of KiSS-1 peptide, the natural ligand of GPR54.</title>
        <authorList>
            <person name="Navarro V.M."/>
            <person name="Castellano J.M."/>
            <person name="Fernandez-Fernandez R."/>
            <person name="Tovar S."/>
            <person name="Roa J."/>
            <person name="Mayen A."/>
            <person name="Nogueiras R."/>
            <person name="Vazquez M.J."/>
            <person name="Barreiro M.L."/>
            <person name="Magni P."/>
            <person name="Aguilar E."/>
            <person name="Dieguez C."/>
            <person name="Pinilla L."/>
            <person name="Tena-Sempere M."/>
        </authorList>
    </citation>
    <scope>ROLE IN LUTEINIZING HORMONE SECRETION</scope>
</reference>
<reference key="11">
    <citation type="journal article" date="2005" name="J. Comp. Neurol.">
        <title>KiSS-1 expression and metastin-like immunoreactivity in the rat brain.</title>
        <authorList>
            <person name="Brailoiu G.C."/>
            <person name="Dun S.L."/>
            <person name="Ohsawa M."/>
            <person name="Yin D."/>
            <person name="Yang J."/>
            <person name="Chang J.K."/>
            <person name="Brailoiu E."/>
            <person name="Dun N.J."/>
        </authorList>
    </citation>
    <scope>TISSUE SPECIFICITY</scope>
    <scope>FUNCTION</scope>
</reference>
<reference key="12">
    <citation type="journal article" date="2005" name="Endocrinology">
        <title>Effects of KiSS-1 peptide, the natural ligand of GPR54, on follicle-stimulating hormone secretion in the rat.</title>
        <authorList>
            <person name="Navarro V.M."/>
            <person name="Castellano J.M."/>
            <person name="Fernandez-Fernandez R."/>
            <person name="Tovar S."/>
            <person name="Roa J."/>
            <person name="Mayen A."/>
            <person name="Barreiro M.L."/>
            <person name="Casanueva F.F."/>
            <person name="Aguilar E."/>
            <person name="Dieguez C."/>
            <person name="Pinilla L."/>
            <person name="Tena-Sempere M."/>
        </authorList>
    </citation>
    <scope>ROLE IN FOLLICLE-STIMULATING HORMONE SECRETION</scope>
</reference>
<protein>
    <recommendedName>
        <fullName>KiSS-1 receptor</fullName>
        <shortName>KiSS-1R</shortName>
    </recommendedName>
    <alternativeName>
        <fullName>G-protein coupled receptor 54</fullName>
    </alternativeName>
    <alternativeName>
        <fullName>G-protein coupled receptor OT7T175</fullName>
        <shortName>rOT7T175</shortName>
    </alternativeName>
    <alternativeName>
        <fullName>Kisspeptins receptor</fullName>
    </alternativeName>
    <alternativeName>
        <fullName>Metastin receptor</fullName>
    </alternativeName>
</protein>
<keyword id="KW-1003">Cell membrane</keyword>
<keyword id="KW-1015">Disulfide bond</keyword>
<keyword id="KW-0297">G-protein coupled receptor</keyword>
<keyword id="KW-0325">Glycoprotein</keyword>
<keyword id="KW-0472">Membrane</keyword>
<keyword id="KW-0675">Receptor</keyword>
<keyword id="KW-1185">Reference proteome</keyword>
<keyword id="KW-0807">Transducer</keyword>
<keyword id="KW-0812">Transmembrane</keyword>
<keyword id="KW-1133">Transmembrane helix</keyword>
<organism>
    <name type="scientific">Rattus norvegicus</name>
    <name type="common">Rat</name>
    <dbReference type="NCBI Taxonomy" id="10116"/>
    <lineage>
        <taxon>Eukaryota</taxon>
        <taxon>Metazoa</taxon>
        <taxon>Chordata</taxon>
        <taxon>Craniata</taxon>
        <taxon>Vertebrata</taxon>
        <taxon>Euteleostomi</taxon>
        <taxon>Mammalia</taxon>
        <taxon>Eutheria</taxon>
        <taxon>Euarchontoglires</taxon>
        <taxon>Glires</taxon>
        <taxon>Rodentia</taxon>
        <taxon>Myomorpha</taxon>
        <taxon>Muroidea</taxon>
        <taxon>Muridae</taxon>
        <taxon>Murinae</taxon>
        <taxon>Rattus</taxon>
    </lineage>
</organism>
<sequence>MAAEATLGPNVSWWAPSNASGCPGCGVNASDGPGSAPRPLDAWLVPLFFAALMLLGLVGNSLVIFVICRHKHMQTVTNFYIANLAATDVTFLLCCVPFTALLYPLPTWVLGDFMCKFVNYIQQVSVQATCATLTAMSVDRWYVTVFPLRALHRRTPRLALTVSLSIWVGSAAVSAPVLALHRLSPGPHTYCSEAFPSRALERAFALYNLLALYLLPLLATCACYGAMLRHLGRAAVRPAPTDGALQGQLLAQRAGAVRTKVSRLVAAVVLLFAACWGPIQLFLVLQALGPSGAWHPRSYAAYALKIWAHCMSYSNSALNPLLYAFLGSHFRQAFCRVCPCGPQRQRRPHASAHSDRAAPHSVPHSRAAHPVRVRTPEPGNPVRRSPSVQDEHTAPL</sequence>
<dbReference type="EMBL" id="AF115516">
    <property type="protein sequence ID" value="AAD19664.1"/>
    <property type="molecule type" value="mRNA"/>
</dbReference>
<dbReference type="EMBL" id="AB051066">
    <property type="protein sequence ID" value="BAB55447.1"/>
    <property type="molecule type" value="mRNA"/>
</dbReference>
<dbReference type="RefSeq" id="NP_076482.2">
    <property type="nucleotide sequence ID" value="NM_023992.2"/>
</dbReference>
<dbReference type="SMR" id="Q924U1"/>
<dbReference type="BioGRID" id="249383">
    <property type="interactions" value="1"/>
</dbReference>
<dbReference type="FunCoup" id="Q924U1">
    <property type="interactions" value="343"/>
</dbReference>
<dbReference type="STRING" id="10116.ENSRNOP00000076298"/>
<dbReference type="BindingDB" id="Q924U1"/>
<dbReference type="ChEMBL" id="CHEMBL1169599"/>
<dbReference type="GuidetoPHARMACOLOGY" id="266"/>
<dbReference type="GlyCosmos" id="Q924U1">
    <property type="glycosylation" value="3 sites, No reported glycans"/>
</dbReference>
<dbReference type="GlyGen" id="Q924U1">
    <property type="glycosylation" value="4 sites"/>
</dbReference>
<dbReference type="PhosphoSitePlus" id="Q924U1"/>
<dbReference type="PaxDb" id="10116-ENSRNOP00000016395"/>
<dbReference type="GeneID" id="78976"/>
<dbReference type="KEGG" id="rno:78976"/>
<dbReference type="UCSC" id="RGD:70930">
    <property type="organism name" value="rat"/>
</dbReference>
<dbReference type="AGR" id="RGD:70930"/>
<dbReference type="CTD" id="84634"/>
<dbReference type="RGD" id="70930">
    <property type="gene designation" value="Kiss1r"/>
</dbReference>
<dbReference type="eggNOG" id="KOG3656">
    <property type="taxonomic scope" value="Eukaryota"/>
</dbReference>
<dbReference type="InParanoid" id="Q924U1"/>
<dbReference type="OrthoDB" id="2132067at2759"/>
<dbReference type="PhylomeDB" id="Q924U1"/>
<dbReference type="TreeFam" id="TF315737"/>
<dbReference type="Reactome" id="R-RNO-375276">
    <property type="pathway name" value="Peptide ligand-binding receptors"/>
</dbReference>
<dbReference type="Reactome" id="R-RNO-416476">
    <property type="pathway name" value="G alpha (q) signalling events"/>
</dbReference>
<dbReference type="PRO" id="PR:Q924U1"/>
<dbReference type="Proteomes" id="UP000002494">
    <property type="component" value="Unplaced"/>
</dbReference>
<dbReference type="GO" id="GO:0009986">
    <property type="term" value="C:cell surface"/>
    <property type="evidence" value="ECO:0000266"/>
    <property type="project" value="RGD"/>
</dbReference>
<dbReference type="GO" id="GO:0005929">
    <property type="term" value="C:cilium"/>
    <property type="evidence" value="ECO:0000266"/>
    <property type="project" value="RGD"/>
</dbReference>
<dbReference type="GO" id="GO:0016020">
    <property type="term" value="C:membrane"/>
    <property type="evidence" value="ECO:0000266"/>
    <property type="project" value="RGD"/>
</dbReference>
<dbReference type="GO" id="GO:0005886">
    <property type="term" value="C:plasma membrane"/>
    <property type="evidence" value="ECO:0000318"/>
    <property type="project" value="GO_Central"/>
</dbReference>
<dbReference type="GO" id="GO:0008528">
    <property type="term" value="F:G protein-coupled peptide receptor activity"/>
    <property type="evidence" value="ECO:0000353"/>
    <property type="project" value="RGD"/>
</dbReference>
<dbReference type="GO" id="GO:0042923">
    <property type="term" value="F:neuropeptide binding"/>
    <property type="evidence" value="ECO:0000314"/>
    <property type="project" value="RGD"/>
</dbReference>
<dbReference type="GO" id="GO:0008188">
    <property type="term" value="F:neuropeptide receptor activity"/>
    <property type="evidence" value="ECO:0000266"/>
    <property type="project" value="RGD"/>
</dbReference>
<dbReference type="GO" id="GO:0050482">
    <property type="term" value="P:arachidonate secretion"/>
    <property type="evidence" value="ECO:0000314"/>
    <property type="project" value="RGD"/>
</dbReference>
<dbReference type="GO" id="GO:0019722">
    <property type="term" value="P:calcium-mediated signaling"/>
    <property type="evidence" value="ECO:0000315"/>
    <property type="project" value="RGD"/>
</dbReference>
<dbReference type="GO" id="GO:0007186">
    <property type="term" value="P:G protein-coupled receptor signaling pathway"/>
    <property type="evidence" value="ECO:0000315"/>
    <property type="project" value="RGD"/>
</dbReference>
<dbReference type="GO" id="GO:0030336">
    <property type="term" value="P:negative regulation of cell migration"/>
    <property type="evidence" value="ECO:0000266"/>
    <property type="project" value="RGD"/>
</dbReference>
<dbReference type="GO" id="GO:0008285">
    <property type="term" value="P:negative regulation of cell population proliferation"/>
    <property type="evidence" value="ECO:0000314"/>
    <property type="project" value="RGD"/>
</dbReference>
<dbReference type="GO" id="GO:0007218">
    <property type="term" value="P:neuropeptide signaling pathway"/>
    <property type="evidence" value="ECO:0000318"/>
    <property type="project" value="GO_Central"/>
</dbReference>
<dbReference type="GO" id="GO:0046887">
    <property type="term" value="P:positive regulation of hormone secretion"/>
    <property type="evidence" value="ECO:0000314"/>
    <property type="project" value="RGD"/>
</dbReference>
<dbReference type="GO" id="GO:0043410">
    <property type="term" value="P:positive regulation of MAPK cascade"/>
    <property type="evidence" value="ECO:0000314"/>
    <property type="project" value="RGD"/>
</dbReference>
<dbReference type="GO" id="GO:0051496">
    <property type="term" value="P:positive regulation of stress fiber assembly"/>
    <property type="evidence" value="ECO:0000314"/>
    <property type="project" value="RGD"/>
</dbReference>
<dbReference type="GO" id="GO:0050806">
    <property type="term" value="P:positive regulation of synaptic transmission"/>
    <property type="evidence" value="ECO:0000315"/>
    <property type="project" value="RGD"/>
</dbReference>
<dbReference type="GO" id="GO:0007165">
    <property type="term" value="P:signal transduction"/>
    <property type="evidence" value="ECO:0000266"/>
    <property type="project" value="RGD"/>
</dbReference>
<dbReference type="CDD" id="cd15095">
    <property type="entry name" value="7tmA_KiSS1R"/>
    <property type="match status" value="1"/>
</dbReference>
<dbReference type="FunFam" id="1.20.1070.10:FF:000171">
    <property type="entry name" value="KISS1 receptor b"/>
    <property type="match status" value="1"/>
</dbReference>
<dbReference type="Gene3D" id="1.20.1070.10">
    <property type="entry name" value="Rhodopsin 7-helix transmembrane proteins"/>
    <property type="match status" value="1"/>
</dbReference>
<dbReference type="InterPro" id="IPR000276">
    <property type="entry name" value="GPCR_Rhodpsn"/>
</dbReference>
<dbReference type="InterPro" id="IPR017452">
    <property type="entry name" value="GPCR_Rhodpsn_7TM"/>
</dbReference>
<dbReference type="InterPro" id="IPR008103">
    <property type="entry name" value="KiSS_1_rcpt"/>
</dbReference>
<dbReference type="PANTHER" id="PTHR45695:SF23">
    <property type="entry name" value="GALANIN-LIKE G-PROTEIN COUPLED RECEPTOR NPR-9"/>
    <property type="match status" value="1"/>
</dbReference>
<dbReference type="PANTHER" id="PTHR45695">
    <property type="entry name" value="LEUCOKININ RECEPTOR-RELATED"/>
    <property type="match status" value="1"/>
</dbReference>
<dbReference type="Pfam" id="PF00001">
    <property type="entry name" value="7tm_1"/>
    <property type="match status" value="1"/>
</dbReference>
<dbReference type="PRINTS" id="PR00237">
    <property type="entry name" value="GPCRRHODOPSN"/>
</dbReference>
<dbReference type="PRINTS" id="PR01728">
    <property type="entry name" value="KISS1RECEPTR"/>
</dbReference>
<dbReference type="SUPFAM" id="SSF81321">
    <property type="entry name" value="Family A G protein-coupled receptor-like"/>
    <property type="match status" value="1"/>
</dbReference>
<dbReference type="PROSITE" id="PS50262">
    <property type="entry name" value="G_PROTEIN_RECEP_F1_2"/>
    <property type="match status" value="1"/>
</dbReference>
<feature type="chain" id="PRO_0000069697" description="KiSS-1 receptor">
    <location>
        <begin position="1"/>
        <end position="396"/>
    </location>
</feature>
<feature type="topological domain" description="Extracellular" evidence="1">
    <location>
        <begin position="1"/>
        <end position="46"/>
    </location>
</feature>
<feature type="transmembrane region" description="Helical; Name=1" evidence="1">
    <location>
        <begin position="47"/>
        <end position="67"/>
    </location>
</feature>
<feature type="topological domain" description="Cytoplasmic" evidence="1">
    <location>
        <begin position="68"/>
        <end position="90"/>
    </location>
</feature>
<feature type="transmembrane region" description="Helical; Name=2" evidence="1">
    <location>
        <begin position="91"/>
        <end position="111"/>
    </location>
</feature>
<feature type="topological domain" description="Extracellular" evidence="1">
    <location>
        <begin position="112"/>
        <end position="120"/>
    </location>
</feature>
<feature type="transmembrane region" description="Helical; Name=3" evidence="1">
    <location>
        <begin position="121"/>
        <end position="138"/>
    </location>
</feature>
<feature type="topological domain" description="Cytoplasmic" evidence="1">
    <location>
        <begin position="139"/>
        <end position="159"/>
    </location>
</feature>
<feature type="transmembrane region" description="Helical; Name=4" evidence="1">
    <location>
        <begin position="160"/>
        <end position="180"/>
    </location>
</feature>
<feature type="topological domain" description="Extracellular" evidence="1">
    <location>
        <begin position="181"/>
        <end position="202"/>
    </location>
</feature>
<feature type="transmembrane region" description="Helical; Name=5" evidence="1">
    <location>
        <begin position="203"/>
        <end position="223"/>
    </location>
</feature>
<feature type="topological domain" description="Cytoplasmic" evidence="1">
    <location>
        <begin position="224"/>
        <end position="264"/>
    </location>
</feature>
<feature type="transmembrane region" description="Helical; Name=6" evidence="1">
    <location>
        <begin position="265"/>
        <end position="285"/>
    </location>
</feature>
<feature type="topological domain" description="Extracellular" evidence="1">
    <location>
        <begin position="286"/>
        <end position="305"/>
    </location>
</feature>
<feature type="transmembrane region" description="Helical; Name=7" evidence="1">
    <location>
        <begin position="306"/>
        <end position="326"/>
    </location>
</feature>
<feature type="topological domain" description="Cytoplasmic" evidence="1">
    <location>
        <begin position="327"/>
        <end position="396"/>
    </location>
</feature>
<feature type="region of interest" description="Disordered" evidence="3">
    <location>
        <begin position="346"/>
        <end position="396"/>
    </location>
</feature>
<feature type="glycosylation site" description="N-linked (GlcNAc...) asparagine" evidence="1">
    <location>
        <position position="10"/>
    </location>
</feature>
<feature type="glycosylation site" description="N-linked (GlcNAc...) asparagine" evidence="1">
    <location>
        <position position="18"/>
    </location>
</feature>
<feature type="glycosylation site" description="N-linked (GlcNAc...) asparagine" evidence="1">
    <location>
        <position position="28"/>
    </location>
</feature>
<feature type="disulfide bond" evidence="2">
    <location>
        <begin position="115"/>
        <end position="191"/>
    </location>
</feature>
<feature type="sequence conflict" description="In Ref. 1; AAD19664." evidence="12" ref="1">
    <original>GPSGAWHPRSYA</original>
    <variation>PLGGLAPSKLC</variation>
    <location>
        <begin position="289"/>
        <end position="300"/>
    </location>
</feature>
<feature type="sequence conflict" description="In Ref. 1." evidence="12" ref="1">
    <original>R</original>
    <variation>H</variation>
    <location>
        <position position="383"/>
    </location>
</feature>
<proteinExistence type="evidence at transcript level"/>
<comment type="function">
    <text evidence="5 7 8 9 10 11">Receptor for metastin, a C-terminally amidated peptide of KiSS1. KiSS1 is a metastasis suppressor protein. Activation of the receptor inhibits cell proliferation and cell migration, key characteristics of tumor metastasis. The receptor is essential for normal gonadotropin-released hormone physiology and for puberty. The hypothalamic KiSS1/KISS1R system is a pivotal factor in central regulation of the gonadotropic axis at puberty and in adulthood. Analysis of the transduction pathways activated by the receptor identifies coupling to phospholipase C and intracellular calcium release through pertussis toxin-insensitive G(q) proteins.</text>
</comment>
<comment type="subcellular location">
    <subcellularLocation>
        <location>Cell membrane</location>
        <topology>Multi-pass membrane protein</topology>
    </subcellularLocation>
</comment>
<comment type="tissue specificity">
    <text evidence="4 6 7 10">Highest expression levels in the cerebrum and cecum. Moderate expression in the ovary, colon and placenta. Low levels in the uterus, small intestine, and thymus. Expressed only moderately in the placenta. No expression in kidney tissues. Has a complex and abundant central nervous system expression pattern. Expressed in brain regions such as pons, midbrain, thalamus, hypothalamus, hippocampus, amygdala, cortex, frontal cortex, and striatum. No expression in the cerebellum. Persistent expression is detected in hypothalamus throughout postnatal development, with maximum expression levels at puberty in both male and female. Hypothalamic expression changed throughout the estrus cycle and is significantly increased after gonadectomy, a rise that is prevented by sex steroid replacement both in males and females.</text>
</comment>
<comment type="developmental stage">
    <text evidence="4">Expression detected in trophoblast giant cells (TGCs), the placenta-derived cell lineage aligned at the boundary between the uterus and placenta, at embryonic days 12.5 (12.5 dpc). However, expression is faint and only observed in some of these cells, and disappears by 15.5 dpc.</text>
</comment>
<comment type="similarity">
    <text evidence="2">Belongs to the G-protein coupled receptor 1 family.</text>
</comment>